<organism>
    <name type="scientific">Homo sapiens</name>
    <name type="common">Human</name>
    <dbReference type="NCBI Taxonomy" id="9606"/>
    <lineage>
        <taxon>Eukaryota</taxon>
        <taxon>Metazoa</taxon>
        <taxon>Chordata</taxon>
        <taxon>Craniata</taxon>
        <taxon>Vertebrata</taxon>
        <taxon>Euteleostomi</taxon>
        <taxon>Mammalia</taxon>
        <taxon>Eutheria</taxon>
        <taxon>Euarchontoglires</taxon>
        <taxon>Primates</taxon>
        <taxon>Haplorrhini</taxon>
        <taxon>Catarrhini</taxon>
        <taxon>Hominidae</taxon>
        <taxon>Homo</taxon>
    </lineage>
</organism>
<gene>
    <name evidence="20 24" type="primary">PDCD1</name>
    <name evidence="20" type="synonym">PD1</name>
</gene>
<keyword id="KW-0002">3D-structure</keyword>
<keyword id="KW-1064">Adaptive immunity</keyword>
<keyword id="KW-0053">Apoptosis</keyword>
<keyword id="KW-1003">Cell membrane</keyword>
<keyword id="KW-1015">Disulfide bond</keyword>
<keyword id="KW-0325">Glycoprotein</keyword>
<keyword id="KW-0391">Immunity</keyword>
<keyword id="KW-0393">Immunoglobulin domain</keyword>
<keyword id="KW-1017">Isopeptide bond</keyword>
<keyword id="KW-0472">Membrane</keyword>
<keyword id="KW-0597">Phosphoprotein</keyword>
<keyword id="KW-1267">Proteomics identification</keyword>
<keyword id="KW-1185">Reference proteome</keyword>
<keyword id="KW-0732">Signal</keyword>
<keyword id="KW-0812">Transmembrane</keyword>
<keyword id="KW-1133">Transmembrane helix</keyword>
<keyword id="KW-0832">Ubl conjugation</keyword>
<reference key="1">
    <citation type="journal article" date="1994" name="Genomics">
        <title>Structure and chromosomal localization of the human PD-1 gene (PDCD1).</title>
        <authorList>
            <person name="Shinohara T."/>
            <person name="Taniwaki M."/>
            <person name="Ishida Y."/>
            <person name="Kawaich M."/>
            <person name="Honjo T."/>
        </authorList>
    </citation>
    <scope>NUCLEOTIDE SEQUENCE [GENOMIC DNA]</scope>
</reference>
<reference key="2">
    <citation type="journal article" date="1997" name="Gene">
        <title>The human PD-1 gene: complete cDNA, genomic organization, and developmentally regulated expression in B cell progenitors.</title>
        <authorList>
            <person name="Finger L.R."/>
            <person name="Pu J."/>
            <person name="Wasserman R."/>
            <person name="Vibhakar R."/>
            <person name="Louie E."/>
            <person name="Hardy R.R."/>
            <person name="Burrows P.D."/>
            <person name="Billips L.D."/>
        </authorList>
    </citation>
    <scope>NUCLEOTIDE SEQUENCE [MRNA]</scope>
</reference>
<reference key="3">
    <citation type="journal article" date="1997" name="Gene">
        <authorList>
            <person name="Finger L.R."/>
            <person name="Pu J."/>
            <person name="Wasserman R."/>
            <person name="Vibhakar R."/>
            <person name="Louie E."/>
            <person name="Hardy R.R."/>
            <person name="Burrows P.D."/>
            <person name="Billips L.D."/>
        </authorList>
    </citation>
    <scope>ERRATUM OF PUBMED:9332365</scope>
</reference>
<reference key="4">
    <citation type="journal article" date="2002" name="Nat. Genet.">
        <title>A regulatory polymorphism in PDCD1 is associated with susceptibility to systemic lupus erythematosus in humans.</title>
        <authorList>
            <person name="Prokunina L."/>
            <person name="Castillejo-Lopez C."/>
            <person name="Oberg F."/>
            <person name="Gunnarsson I."/>
            <person name="Berg L."/>
            <person name="Magnusson V."/>
            <person name="Brookes A.J."/>
            <person name="Tentler D."/>
            <person name="Kristjansdottir H."/>
            <person name="Grondal G."/>
            <person name="Bolstad A.I."/>
            <person name="Svenungsson E."/>
            <person name="Lundberg I."/>
            <person name="Sturfelt G."/>
            <person name="Jonssen A."/>
            <person name="Truedsson L."/>
            <person name="Lima G."/>
            <person name="Alcocer-Varela J."/>
            <person name="Jonsson R."/>
            <person name="Gyllensten U.B."/>
            <person name="Harley J.B."/>
            <person name="Alarcon-Segovia D."/>
            <person name="Steinsson K."/>
            <person name="Alarcon-Riquelme M.E."/>
        </authorList>
    </citation>
    <scope>NUCLEOTIDE SEQUENCE [GENOMIC DNA]</scope>
</reference>
<reference key="5">
    <citation type="submission" date="2003-02" db="EMBL/GenBank/DDBJ databases">
        <title>Cloning of PD-1 cDNA from activated peripheral leukocytes.</title>
        <authorList>
            <person name="He X."/>
            <person name="Xu L."/>
            <person name="Liu Y."/>
            <person name="Zeng Y."/>
        </authorList>
    </citation>
    <scope>NUCLEOTIDE SEQUENCE [MRNA]</scope>
</reference>
<reference key="6">
    <citation type="submission" date="2006-10" db="EMBL/GenBank/DDBJ databases">
        <authorList>
            <person name="Livingston R.J."/>
            <person name="Shaffer T."/>
            <person name="McFarland I."/>
            <person name="Nguyen C.P."/>
            <person name="Stanaway I.B."/>
            <person name="Rajkumar N."/>
            <person name="Johnson E.J."/>
            <person name="da Ponte S.H."/>
            <person name="Willa H."/>
            <person name="Ahearn M.O."/>
            <person name="Bertucci C."/>
            <person name="Acklestad J."/>
            <person name="Carroll A."/>
            <person name="Swanson J."/>
            <person name="Gildersleeve H.I."/>
            <person name="Nickerson D.A."/>
        </authorList>
    </citation>
    <scope>NUCLEOTIDE SEQUENCE [GENOMIC DNA]</scope>
</reference>
<reference key="7">
    <citation type="journal article" date="2004" name="Nat. Genet.">
        <title>Complete sequencing and characterization of 21,243 full-length human cDNAs.</title>
        <authorList>
            <person name="Ota T."/>
            <person name="Suzuki Y."/>
            <person name="Nishikawa T."/>
            <person name="Otsuki T."/>
            <person name="Sugiyama T."/>
            <person name="Irie R."/>
            <person name="Wakamatsu A."/>
            <person name="Hayashi K."/>
            <person name="Sato H."/>
            <person name="Nagai K."/>
            <person name="Kimura K."/>
            <person name="Makita H."/>
            <person name="Sekine M."/>
            <person name="Obayashi M."/>
            <person name="Nishi T."/>
            <person name="Shibahara T."/>
            <person name="Tanaka T."/>
            <person name="Ishii S."/>
            <person name="Yamamoto J."/>
            <person name="Saito K."/>
            <person name="Kawai Y."/>
            <person name="Isono Y."/>
            <person name="Nakamura Y."/>
            <person name="Nagahari K."/>
            <person name="Murakami K."/>
            <person name="Yasuda T."/>
            <person name="Iwayanagi T."/>
            <person name="Wagatsuma M."/>
            <person name="Shiratori A."/>
            <person name="Sudo H."/>
            <person name="Hosoiri T."/>
            <person name="Kaku Y."/>
            <person name="Kodaira H."/>
            <person name="Kondo H."/>
            <person name="Sugawara M."/>
            <person name="Takahashi M."/>
            <person name="Kanda K."/>
            <person name="Yokoi T."/>
            <person name="Furuya T."/>
            <person name="Kikkawa E."/>
            <person name="Omura Y."/>
            <person name="Abe K."/>
            <person name="Kamihara K."/>
            <person name="Katsuta N."/>
            <person name="Sato K."/>
            <person name="Tanikawa M."/>
            <person name="Yamazaki M."/>
            <person name="Ninomiya K."/>
            <person name="Ishibashi T."/>
            <person name="Yamashita H."/>
            <person name="Murakawa K."/>
            <person name="Fujimori K."/>
            <person name="Tanai H."/>
            <person name="Kimata M."/>
            <person name="Watanabe M."/>
            <person name="Hiraoka S."/>
            <person name="Chiba Y."/>
            <person name="Ishida S."/>
            <person name="Ono Y."/>
            <person name="Takiguchi S."/>
            <person name="Watanabe S."/>
            <person name="Yosida M."/>
            <person name="Hotuta T."/>
            <person name="Kusano J."/>
            <person name="Kanehori K."/>
            <person name="Takahashi-Fujii A."/>
            <person name="Hara H."/>
            <person name="Tanase T.-O."/>
            <person name="Nomura Y."/>
            <person name="Togiya S."/>
            <person name="Komai F."/>
            <person name="Hara R."/>
            <person name="Takeuchi K."/>
            <person name="Arita M."/>
            <person name="Imose N."/>
            <person name="Musashino K."/>
            <person name="Yuuki H."/>
            <person name="Oshima A."/>
            <person name="Sasaki N."/>
            <person name="Aotsuka S."/>
            <person name="Yoshikawa Y."/>
            <person name="Matsunawa H."/>
            <person name="Ichihara T."/>
            <person name="Shiohata N."/>
            <person name="Sano S."/>
            <person name="Moriya S."/>
            <person name="Momiyama H."/>
            <person name="Satoh N."/>
            <person name="Takami S."/>
            <person name="Terashima Y."/>
            <person name="Suzuki O."/>
            <person name="Nakagawa S."/>
            <person name="Senoh A."/>
            <person name="Mizoguchi H."/>
            <person name="Goto Y."/>
            <person name="Shimizu F."/>
            <person name="Wakebe H."/>
            <person name="Hishigaki H."/>
            <person name="Watanabe T."/>
            <person name="Sugiyama A."/>
            <person name="Takemoto M."/>
            <person name="Kawakami B."/>
            <person name="Yamazaki M."/>
            <person name="Watanabe K."/>
            <person name="Kumagai A."/>
            <person name="Itakura S."/>
            <person name="Fukuzumi Y."/>
            <person name="Fujimori Y."/>
            <person name="Komiyama M."/>
            <person name="Tashiro H."/>
            <person name="Tanigami A."/>
            <person name="Fujiwara T."/>
            <person name="Ono T."/>
            <person name="Yamada K."/>
            <person name="Fujii Y."/>
            <person name="Ozaki K."/>
            <person name="Hirao M."/>
            <person name="Ohmori Y."/>
            <person name="Kawabata A."/>
            <person name="Hikiji T."/>
            <person name="Kobatake N."/>
            <person name="Inagaki H."/>
            <person name="Ikema Y."/>
            <person name="Okamoto S."/>
            <person name="Okitani R."/>
            <person name="Kawakami T."/>
            <person name="Noguchi S."/>
            <person name="Itoh T."/>
            <person name="Shigeta K."/>
            <person name="Senba T."/>
            <person name="Matsumura K."/>
            <person name="Nakajima Y."/>
            <person name="Mizuno T."/>
            <person name="Morinaga M."/>
            <person name="Sasaki M."/>
            <person name="Togashi T."/>
            <person name="Oyama M."/>
            <person name="Hata H."/>
            <person name="Watanabe M."/>
            <person name="Komatsu T."/>
            <person name="Mizushima-Sugano J."/>
            <person name="Satoh T."/>
            <person name="Shirai Y."/>
            <person name="Takahashi Y."/>
            <person name="Nakagawa K."/>
            <person name="Okumura K."/>
            <person name="Nagase T."/>
            <person name="Nomura N."/>
            <person name="Kikuchi H."/>
            <person name="Masuho Y."/>
            <person name="Yamashita R."/>
            <person name="Nakai K."/>
            <person name="Yada T."/>
            <person name="Nakamura Y."/>
            <person name="Ohara O."/>
            <person name="Isogai T."/>
            <person name="Sugano S."/>
        </authorList>
    </citation>
    <scope>NUCLEOTIDE SEQUENCE [LARGE SCALE MRNA]</scope>
</reference>
<reference key="8">
    <citation type="journal article" date="2004" name="Genome Res.">
        <title>The status, quality, and expansion of the NIH full-length cDNA project: the Mammalian Gene Collection (MGC).</title>
        <authorList>
            <consortium name="The MGC Project Team"/>
        </authorList>
    </citation>
    <scope>NUCLEOTIDE SEQUENCE [LARGE SCALE MRNA]</scope>
</reference>
<reference key="9">
    <citation type="submission" date="2005-07" db="EMBL/GenBank/DDBJ databases">
        <authorList>
            <person name="Mural R.J."/>
            <person name="Istrail S."/>
            <person name="Sutton G."/>
            <person name="Florea L."/>
            <person name="Halpern A.L."/>
            <person name="Mobarry C.M."/>
            <person name="Lippert R."/>
            <person name="Walenz B."/>
            <person name="Shatkay H."/>
            <person name="Dew I."/>
            <person name="Miller J.R."/>
            <person name="Flanigan M.J."/>
            <person name="Edwards N.J."/>
            <person name="Bolanos R."/>
            <person name="Fasulo D."/>
            <person name="Halldorsson B.V."/>
            <person name="Hannenhalli S."/>
            <person name="Turner R."/>
            <person name="Yooseph S."/>
            <person name="Lu F."/>
            <person name="Nusskern D.R."/>
            <person name="Shue B.C."/>
            <person name="Zheng X.H."/>
            <person name="Zhong F."/>
            <person name="Delcher A.L."/>
            <person name="Huson D.H."/>
            <person name="Kravitz S.A."/>
            <person name="Mouchard L."/>
            <person name="Reinert K."/>
            <person name="Remington K.A."/>
            <person name="Clark A.G."/>
            <person name="Waterman M.S."/>
            <person name="Eichler E.E."/>
            <person name="Adams M.D."/>
            <person name="Hunkapiller M.W."/>
            <person name="Myers E.W."/>
            <person name="Venter J.C."/>
        </authorList>
    </citation>
    <scope>NUCLEOTIDE SEQUENCE [LARGE SCALE GENOMIC DNA]</scope>
</reference>
<reference key="10">
    <citation type="journal article" date="2011" name="Ann. N. Y. Acad. Sci.">
        <title>The role of the PD-1 pathway in autoimmunity and peripheral tolerance.</title>
        <authorList>
            <person name="Fife B.T."/>
            <person name="Pauken K.E."/>
        </authorList>
    </citation>
    <scope>FUNCTION</scope>
</reference>
<reference key="11">
    <citation type="journal article" date="2012" name="N. Engl. J. Med.">
        <title>Safety, activity, and immune correlates of anti-PD-1 antibody in cancer.</title>
        <authorList>
            <person name="Topalian S.L."/>
            <person name="Hodi F.S."/>
            <person name="Brahmer J.R."/>
            <person name="Gettinger S.N."/>
            <person name="Smith D.C."/>
            <person name="McDermott D.F."/>
            <person name="Powderly J.D."/>
            <person name="Carvajal R.D."/>
            <person name="Sosman J.A."/>
            <person name="Atkins M.B."/>
            <person name="Leming P.D."/>
            <person name="Spigel D.R."/>
            <person name="Antonia S.J."/>
            <person name="Horn L."/>
            <person name="Drake C.G."/>
            <person name="Pardoll D.M."/>
            <person name="Chen L."/>
            <person name="Sharfman W.H."/>
            <person name="Anders R.A."/>
            <person name="Taube J.M."/>
            <person name="McMiller T.L."/>
            <person name="Xu H."/>
            <person name="Korman A.J."/>
            <person name="Jure-Kunkel M."/>
            <person name="Agrawal S."/>
            <person name="McDonald D."/>
            <person name="Kollia G.D."/>
            <person name="Gupta A."/>
            <person name="Wigginton J.M."/>
            <person name="Sznol M."/>
        </authorList>
    </citation>
    <scope>FUNCTION</scope>
    <scope>ACTIVITY REGULATION</scope>
</reference>
<reference key="12">
    <citation type="journal article" date="2014" name="Lancet">
        <title>Anti-programmed-death-receptor-1 treatment with pembrolizumab in ipilimumab-refractory advanced melanoma: a randomised dose-comparison cohort of a phase 1 trial.</title>
        <authorList>
            <person name="Robert C."/>
            <person name="Ribas A."/>
            <person name="Wolchok J.D."/>
            <person name="Hodi F.S."/>
            <person name="Hamid O."/>
            <person name="Kefford R."/>
            <person name="Weber J.S."/>
            <person name="Joshua A.M."/>
            <person name="Hwu W.J."/>
            <person name="Gangadhar T.C."/>
            <person name="Patnaik A."/>
            <person name="Dronca R."/>
            <person name="Zarour H."/>
            <person name="Joseph R.W."/>
            <person name="Boasberg P."/>
            <person name="Chmielowski B."/>
            <person name="Mateus C."/>
            <person name="Postow M.A."/>
            <person name="Gergich K."/>
            <person name="Elassaiss-Schaap J."/>
            <person name="Li X.N."/>
            <person name="Iannone R."/>
            <person name="Ebbinghaus S.W."/>
            <person name="Kang S.P."/>
            <person name="Daud A."/>
        </authorList>
    </citation>
    <scope>FUNCTION</scope>
    <scope>ACTIVITY REGULATION</scope>
</reference>
<reference key="13">
    <citation type="journal article" date="2015" name="N. Engl. J. Med.">
        <title>Nivolumab in previously untreated melanoma without BRAF mutation.</title>
        <authorList>
            <person name="Robert C."/>
            <person name="Long G.V."/>
            <person name="Brady B."/>
            <person name="Dutriaux C."/>
            <person name="Maio M."/>
            <person name="Mortier L."/>
            <person name="Hassel J.C."/>
            <person name="Rutkowski P."/>
            <person name="McNeil C."/>
            <person name="Kalinka-Warzocha E."/>
            <person name="Savage K.J."/>
            <person name="Hernberg M.M."/>
            <person name="Lebbe C."/>
            <person name="Charles J."/>
            <person name="Mihalcioiu C."/>
            <person name="Chiarion-Sileni V."/>
            <person name="Mauch C."/>
            <person name="Cognetti F."/>
            <person name="Arance A."/>
            <person name="Schmidt H."/>
            <person name="Schadendorf D."/>
            <person name="Gogas H."/>
            <person name="Lundgren-Eriksson L."/>
            <person name="Horak C."/>
            <person name="Sharkey B."/>
            <person name="Waxman I.M."/>
            <person name="Atkinson V."/>
            <person name="Ascierto P.A."/>
        </authorList>
    </citation>
    <scope>FUNCTION</scope>
    <scope>ACTIVITY REGULATION</scope>
</reference>
<reference key="14">
    <citation type="journal article" date="2018" name="Nature">
        <title>FBXO38 mediates PD-1 ubiquitination and regulates anti-tumour immunity of T cells.</title>
        <authorList>
            <person name="Meng X."/>
            <person name="Liu X."/>
            <person name="Guo X."/>
            <person name="Jiang S."/>
            <person name="Chen T."/>
            <person name="Hu Z."/>
            <person name="Liu H."/>
            <person name="Bai Y."/>
            <person name="Xue M."/>
            <person name="Hu R."/>
            <person name="Sun S.C."/>
            <person name="Liu X."/>
            <person name="Zhou P."/>
            <person name="Huang X."/>
            <person name="Wei L."/>
            <person name="Yang W."/>
            <person name="Xu C."/>
        </authorList>
    </citation>
    <scope>UBIQUITINATION AT LYS-233</scope>
    <scope>SUBCELLULAR LOCATION</scope>
    <scope>MUTAGENESIS OF LYS-210 AND LYS-233</scope>
</reference>
<reference key="15">
    <citation type="journal article" date="2018" name="Gene">
        <title>PD-1 pathway and its clinical application: A 20year journey after discovery of the complete human PD-1 gene.</title>
        <authorList>
            <person name="Berger K.N."/>
            <person name="Pu J.J."/>
        </authorList>
    </citation>
    <scope>REVIEW</scope>
</reference>
<reference key="16">
    <citation type="journal article" date="2021" name="Nat. Med.">
        <title>Inherited PD-1 deficiency underlies tuberculosis and autoimmunity in a child.</title>
        <authorList>
            <person name="Ogishi M."/>
            <person name="Yang R."/>
            <person name="Aytekin C."/>
            <person name="Langlais D."/>
            <person name="Bourgey M."/>
            <person name="Khan T."/>
            <person name="Ali F.A."/>
            <person name="Rahman M."/>
            <person name="Delmonte O.M."/>
            <person name="Chrabieh M."/>
            <person name="Zhang P."/>
            <person name="Gruber C."/>
            <person name="Pelham S.J."/>
            <person name="Spaan A.N."/>
            <person name="Rosain J."/>
            <person name="Lei W.T."/>
            <person name="Drutman S."/>
            <person name="Hellmann M.D."/>
            <person name="Callahan M.K."/>
            <person name="Adamow M."/>
            <person name="Wong P."/>
            <person name="Wolchok J.D."/>
            <person name="Rao G."/>
            <person name="Ma C.S."/>
            <person name="Nakajima Y."/>
            <person name="Yaguchi T."/>
            <person name="Chamoto K."/>
            <person name="Williams S.C."/>
            <person name="Emile J.F."/>
            <person name="Rozenberg F."/>
            <person name="Glickman M.S."/>
            <person name="Rapaport F."/>
            <person name="Kerner G."/>
            <person name="Allington G."/>
            <person name="Tezcan I."/>
            <person name="Cagdas D."/>
            <person name="Hosnut F.O."/>
            <person name="Dogu F."/>
            <person name="Ikinciogullari A."/>
            <person name="Rao V.K."/>
            <person name="Kainulainen L."/>
            <person name="Beziat V."/>
            <person name="Bustamante J."/>
            <person name="Vilarinho S."/>
            <person name="Lifton R.P."/>
            <person name="Boisson B."/>
            <person name="Abel L."/>
            <person name="Bogunovic D."/>
            <person name="Marr N."/>
            <person name="Notarangelo L.D."/>
            <person name="Tangye S.G."/>
            <person name="Honjo T."/>
            <person name="Gros P."/>
            <person name="Boisson-Dupuis S."/>
            <person name="Casanova J.L."/>
        </authorList>
    </citation>
    <scope>INVOLVEMENT IN AIMTBS</scope>
</reference>
<reference key="17">
    <citation type="journal article" date="2023" name="Nat. Commun.">
        <title>ERK and USP5 govern PD-1 homeostasis via deubiquitination to modulate tumor immunotherapy.</title>
        <authorList>
            <person name="Xiao X."/>
            <person name="Shi J."/>
            <person name="He C."/>
            <person name="Bu X."/>
            <person name="Sun Y."/>
            <person name="Gao M."/>
            <person name="Xiang B."/>
            <person name="Xiong W."/>
            <person name="Dai P."/>
            <person name="Mao Q."/>
            <person name="Xing X."/>
            <person name="Yao Y."/>
            <person name="Yu H."/>
            <person name="Xu G."/>
            <person name="Li S."/>
            <person name="Ren Y."/>
            <person name="Chen B."/>
            <person name="Jiang C."/>
            <person name="Meng G."/>
            <person name="Lee Y.R."/>
            <person name="Wei W."/>
            <person name="Freeman G.J."/>
            <person name="Xie C."/>
            <person name="Zhang J."/>
        </authorList>
    </citation>
    <scope>FUNCTION</scope>
    <scope>DEUBIQUITINATION BY USP5</scope>
    <scope>PHOSPHORYLATION AT THR-234</scope>
</reference>
<reference evidence="25" key="18">
    <citation type="journal article" date="2013" name="J. Biol. Chem.">
        <title>Structure and interactions of the human programmed cell death 1 receptor.</title>
        <authorList>
            <person name="Cheng X."/>
            <person name="Veverka V."/>
            <person name="Radhakrishnan A."/>
            <person name="Waters L.C."/>
            <person name="Muskett F.W."/>
            <person name="Morgan S.H."/>
            <person name="Huo J."/>
            <person name="Yu C."/>
            <person name="Evans E.J."/>
            <person name="Leslie A.J."/>
            <person name="Griffiths M."/>
            <person name="Stubberfield C."/>
            <person name="Griffin R."/>
            <person name="Henry A.J."/>
            <person name="Jansson A."/>
            <person name="Ladbury J.E."/>
            <person name="Ikemizu S."/>
            <person name="Carr M.D."/>
            <person name="Davis S.J."/>
        </authorList>
    </citation>
    <scope>STRUCTURE BY NMR OF 34-150</scope>
    <scope>DISULFIDE BOND</scope>
</reference>
<reference evidence="26" key="19">
    <citation type="journal article" date="2015" name="Structure">
        <title>Structure of the complex of human programmed death 1, PD-1, and its ligand PD-L1.</title>
        <authorList>
            <person name="Zak K.M."/>
            <person name="Kitel R."/>
            <person name="Przetocka S."/>
            <person name="Golik P."/>
            <person name="Guzik K."/>
            <person name="Musielak B."/>
            <person name="Domling A."/>
            <person name="Dubin G."/>
            <person name="Holak T.A."/>
        </authorList>
    </citation>
    <scope>X-RAY CRYSTALLOGRAPHY (2.45 ANGSTROMS) OF 33-150 IN COMPLEX WITH CD274</scope>
    <scope>DISULFIDE BOND</scope>
</reference>
<reference evidence="27" key="20">
    <citation type="journal article" date="2016" name="Sci. Rep.">
        <title>High-resolution crystal structure of the therapeutic antibody pembrolizumab bound to the human PD-1.</title>
        <authorList>
            <person name="Horita S."/>
            <person name="Nomura Y."/>
            <person name="Sato Y."/>
            <person name="Shimamura T."/>
            <person name="Iwata S."/>
            <person name="Nomura N."/>
        </authorList>
    </citation>
    <scope>X-RAY CRYSTALLOGRAPHY (2.15 ANGSTROMS) OF 32-160 IN COMPLEX WITH PEMBROLIZUMAB</scope>
    <scope>ACTIVITY REGULATION</scope>
    <scope>DISULFIDE BOND</scope>
</reference>
<reference evidence="28" key="21">
    <citation type="journal article" date="2016" name="Structure">
        <title>Structure and Dynamics of PD-L1 and an Ultra-High-Affinity PD-1 Receptor Mutant.</title>
        <authorList>
            <person name="Pascolutti R."/>
            <person name="Sun X."/>
            <person name="Kao J."/>
            <person name="Maute R.L."/>
            <person name="Ring A.M."/>
            <person name="Bowman G.R."/>
            <person name="Kruse A.C."/>
        </authorList>
    </citation>
    <scope>X-RAY CRYSTALLOGRAPHY (2.89 ANGSTROMS) OF 26-146</scope>
</reference>
<reference evidence="29" key="22">
    <citation type="journal article" date="2017" name="Cell Res.">
        <title>Structural basis for blocking PD-1-mediated immune suppression by therapeutic antibody pembrolizumab.</title>
        <authorList>
            <person name="Na Z."/>
            <person name="Yeo S.P."/>
            <person name="Bharath S.R."/>
            <person name="Bowler M.W."/>
            <person name="Balikci E."/>
            <person name="Wang C.I."/>
            <person name="Song H."/>
        </authorList>
    </citation>
    <scope>X-RAY CRYSTALLOGRAPHY (2.90 ANGSTROMS) OF 33-146 IN COMPLEX WITH PEMBROLIZUMAB</scope>
    <scope>ACTIVITY REGULATION</scope>
    <scope>DISULFIDE BOND</scope>
</reference>
<reference evidence="30" key="23">
    <citation type="journal article" date="2017" name="Nat. Commun.">
        <title>An unexpected N-terminal loop in PD-1 dominates binding by nivolumab.</title>
        <authorList>
            <person name="Tan S."/>
            <person name="Zhang H."/>
            <person name="Chai Y."/>
            <person name="Song H."/>
            <person name="Tong Z."/>
            <person name="Wang Q."/>
            <person name="Qi J."/>
            <person name="Wong G."/>
            <person name="Zhu X."/>
            <person name="Liu W.J."/>
            <person name="Gao S."/>
            <person name="Wang Z."/>
            <person name="Shi Y."/>
            <person name="Yang F."/>
            <person name="Gao G.F."/>
            <person name="Yan J."/>
        </authorList>
    </citation>
    <scope>X-RAY CRYSTALLOGRAPHY (2.40 ANGSTROMS) OF 1-167 IN COMPLEX WITH NIVOLUMAB</scope>
    <scope>GLYCOSYLATION AT ASN-49; ASN-58; ASN-74 AND ASN-116</scope>
    <scope>MUTAGENESIS OF ASN-49; ASN-58; ASN-74 AND ASN-116</scope>
</reference>
<proteinExistence type="evidence at protein level"/>
<name>PDCD1_HUMAN</name>
<evidence type="ECO:0000250" key="1">
    <source>
        <dbReference type="UniProtKB" id="Q02242"/>
    </source>
</evidence>
<evidence type="ECO:0000255" key="2"/>
<evidence type="ECO:0000255" key="3">
    <source>
        <dbReference type="PROSITE-ProRule" id="PRU00114"/>
    </source>
</evidence>
<evidence type="ECO:0000256" key="4">
    <source>
        <dbReference type="SAM" id="MobiDB-lite"/>
    </source>
</evidence>
<evidence type="ECO:0000269" key="5">
    <source>
    </source>
</evidence>
<evidence type="ECO:0000269" key="6">
    <source>
    </source>
</evidence>
<evidence type="ECO:0000269" key="7">
    <source>
    </source>
</evidence>
<evidence type="ECO:0000269" key="8">
    <source>
    </source>
</evidence>
<evidence type="ECO:0000269" key="9">
    <source>
    </source>
</evidence>
<evidence type="ECO:0000269" key="10">
    <source>
    </source>
</evidence>
<evidence type="ECO:0000269" key="11">
    <source>
    </source>
</evidence>
<evidence type="ECO:0000269" key="12">
    <source>
    </source>
</evidence>
<evidence type="ECO:0000269" key="13">
    <source>
    </source>
</evidence>
<evidence type="ECO:0000269" key="14">
    <source>
    </source>
</evidence>
<evidence type="ECO:0000269" key="15">
    <source>
    </source>
</evidence>
<evidence type="ECO:0000269" key="16">
    <source>
    </source>
</evidence>
<evidence type="ECO:0000269" key="17">
    <source>
    </source>
</evidence>
<evidence type="ECO:0000303" key="18">
    <source>
    </source>
</evidence>
<evidence type="ECO:0000303" key="19">
    <source>
    </source>
</evidence>
<evidence type="ECO:0000303" key="20">
    <source>
    </source>
</evidence>
<evidence type="ECO:0000303" key="21">
    <source>
    </source>
</evidence>
<evidence type="ECO:0000305" key="22"/>
<evidence type="ECO:0000305" key="23">
    <source>
    </source>
</evidence>
<evidence type="ECO:0000312" key="24">
    <source>
        <dbReference type="HGNC" id="HGNC:8760"/>
    </source>
</evidence>
<evidence type="ECO:0007744" key="25">
    <source>
        <dbReference type="PDB" id="2M2D"/>
    </source>
</evidence>
<evidence type="ECO:0007744" key="26">
    <source>
        <dbReference type="PDB" id="4ZQK"/>
    </source>
</evidence>
<evidence type="ECO:0007744" key="27">
    <source>
        <dbReference type="PDB" id="5B8C"/>
    </source>
</evidence>
<evidence type="ECO:0007744" key="28">
    <source>
        <dbReference type="PDB" id="5IUS"/>
    </source>
</evidence>
<evidence type="ECO:0007744" key="29">
    <source>
        <dbReference type="PDB" id="5JXE"/>
    </source>
</evidence>
<evidence type="ECO:0007744" key="30">
    <source>
        <dbReference type="PDB" id="5WT9"/>
    </source>
</evidence>
<evidence type="ECO:0007829" key="31">
    <source>
        <dbReference type="PDB" id="4ZQK"/>
    </source>
</evidence>
<evidence type="ECO:0007829" key="32">
    <source>
        <dbReference type="PDB" id="5WT9"/>
    </source>
</evidence>
<evidence type="ECO:0007829" key="33">
    <source>
        <dbReference type="PDB" id="6K0Y"/>
    </source>
</evidence>
<evidence type="ECO:0007829" key="34">
    <source>
        <dbReference type="PDB" id="6UMU"/>
    </source>
</evidence>
<evidence type="ECO:0007829" key="35">
    <source>
        <dbReference type="PDB" id="7CGW"/>
    </source>
</evidence>
<evidence type="ECO:0007829" key="36">
    <source>
        <dbReference type="PDB" id="7WSL"/>
    </source>
</evidence>
<evidence type="ECO:0007829" key="37">
    <source>
        <dbReference type="PDB" id="8U31"/>
    </source>
</evidence>
<protein>
    <recommendedName>
        <fullName evidence="20">Programmed cell death protein 1</fullName>
        <shortName evidence="20">Protein PD-1</shortName>
        <shortName evidence="18 21">hPD-1</shortName>
    </recommendedName>
    <cdAntigenName>CD279</cdAntigenName>
</protein>
<feature type="signal peptide" evidence="2">
    <location>
        <begin position="1"/>
        <end position="24"/>
    </location>
</feature>
<feature type="chain" id="PRO_0000014892" description="Programmed cell death protein 1">
    <location>
        <begin position="25"/>
        <end position="288"/>
    </location>
</feature>
<feature type="topological domain" description="Extracellular" evidence="2">
    <location>
        <begin position="25"/>
        <end position="170"/>
    </location>
</feature>
<feature type="transmembrane region" description="Helical" evidence="2">
    <location>
        <begin position="171"/>
        <end position="191"/>
    </location>
</feature>
<feature type="topological domain" description="Cytoplasmic" evidence="2">
    <location>
        <begin position="192"/>
        <end position="288"/>
    </location>
</feature>
<feature type="domain" description="Ig-like V-type" evidence="3">
    <location>
        <begin position="35"/>
        <end position="145"/>
    </location>
</feature>
<feature type="region of interest" description="Nivolumab binding" evidence="13 30">
    <location>
        <begin position="25"/>
        <end position="34"/>
    </location>
</feature>
<feature type="region of interest" description="Interaction with CD274/PDCD1L1" evidence="10">
    <location>
        <begin position="70"/>
        <end position="77"/>
    </location>
</feature>
<feature type="region of interest" description="Pembrolizumab binding" evidence="11 12 27 29">
    <location>
        <begin position="74"/>
        <end position="99"/>
    </location>
</feature>
<feature type="region of interest" description="Disordered" evidence="4">
    <location>
        <begin position="254"/>
        <end position="288"/>
    </location>
</feature>
<feature type="short sequence motif" description="ITIM motif" evidence="1">
    <location>
        <begin position="221"/>
        <end position="226"/>
    </location>
</feature>
<feature type="short sequence motif" description="ITSM motif" evidence="1">
    <location>
        <begin position="247"/>
        <end position="251"/>
    </location>
</feature>
<feature type="compositionally biased region" description="Basic and acidic residues" evidence="4">
    <location>
        <begin position="278"/>
        <end position="288"/>
    </location>
</feature>
<feature type="modified residue" description="Phosphotyrosine" evidence="1">
    <location>
        <position position="223"/>
    </location>
</feature>
<feature type="modified residue" description="Phosphothreonine; by MAPK3" evidence="16">
    <location>
        <position position="234"/>
    </location>
</feature>
<feature type="modified residue" description="Phosphotyrosine" evidence="1">
    <location>
        <position position="248"/>
    </location>
</feature>
<feature type="glycosylation site" description="N-linked (GlcNAc...) asparagine" evidence="23">
    <location>
        <position position="49"/>
    </location>
</feature>
<feature type="glycosylation site" description="N-linked (GlcNAc...) asparagine" evidence="13 30">
    <location>
        <position position="58"/>
    </location>
</feature>
<feature type="glycosylation site" description="N-linked (GlcNAc...) asparagine" evidence="23">
    <location>
        <position position="74"/>
    </location>
</feature>
<feature type="glycosylation site" description="N-linked (GlcNAc...) asparagine" evidence="23">
    <location>
        <position position="116"/>
    </location>
</feature>
<feature type="disulfide bond" evidence="3 7 10 11 12 25 26 27 29">
    <location>
        <begin position="54"/>
        <end position="123"/>
    </location>
</feature>
<feature type="cross-link" description="Glycyl lysine isopeptide (Lys-Gly) (interchain with G-Cter in ubiquitin)" evidence="14">
    <location>
        <position position="233"/>
    </location>
</feature>
<feature type="sequence variant" id="VAR_031685" description="In dbSNP:rs2227982.">
    <original>A</original>
    <variation>V</variation>
    <location>
        <position position="215"/>
    </location>
</feature>
<feature type="mutagenesis site" description="Decreased N-glycosylation without affecting binding to binding to nivolumab drug." evidence="13">
    <original>N</original>
    <variation>A</variation>
    <location>
        <position position="49"/>
    </location>
</feature>
<feature type="mutagenesis site" description="Decreased N-glycosylation without affecting binding to binding to nivolumab drug." evidence="13">
    <original>N</original>
    <variation>A</variation>
    <location>
        <position position="58"/>
    </location>
</feature>
<feature type="mutagenesis site" description="Decreased N-glycosylation without affecting binding to binding to nivolumab drug." evidence="13">
    <original>N</original>
    <variation>A</variation>
    <location>
        <position position="74"/>
    </location>
</feature>
<feature type="mutagenesis site" description="Decreased N-glycosylation without affecting binding to binding to nivolumab drug." evidence="13">
    <original>N</original>
    <variation>A</variation>
    <location>
        <position position="116"/>
    </location>
</feature>
<feature type="mutagenesis site" description="Does not affect ubiquitination by the SCF(FBXO38) complex." evidence="14">
    <original>K</original>
    <variation>R</variation>
    <location>
        <position position="210"/>
    </location>
</feature>
<feature type="mutagenesis site" description="Abolishes ubiquitination by the SCF(FBXO38) complex." evidence="14">
    <original>K</original>
    <variation>R</variation>
    <location>
        <position position="233"/>
    </location>
</feature>
<feature type="sequence conflict" description="In Ref. 2; AAC51773." evidence="22" ref="2">
    <original>S</original>
    <variation>F</variation>
    <location>
        <position position="38"/>
    </location>
</feature>
<feature type="sequence conflict" description="In Ref. 1; AAC41700." evidence="22" ref="1">
    <original>P</original>
    <variation>S</variation>
    <location>
        <position position="162"/>
    </location>
</feature>
<feature type="strand" evidence="32">
    <location>
        <begin position="27"/>
        <end position="29"/>
    </location>
</feature>
<feature type="strand" evidence="34">
    <location>
        <begin position="36"/>
        <end position="38"/>
    </location>
</feature>
<feature type="strand" evidence="34">
    <location>
        <begin position="40"/>
        <end position="45"/>
    </location>
</feature>
<feature type="strand" evidence="37">
    <location>
        <begin position="46"/>
        <end position="48"/>
    </location>
</feature>
<feature type="strand" evidence="34">
    <location>
        <begin position="50"/>
        <end position="55"/>
    </location>
</feature>
<feature type="strand" evidence="36">
    <location>
        <begin position="59"/>
        <end position="61"/>
    </location>
</feature>
<feature type="strand" evidence="34">
    <location>
        <begin position="63"/>
        <end position="70"/>
    </location>
</feature>
<feature type="strand" evidence="31">
    <location>
        <begin position="72"/>
        <end position="74"/>
    </location>
</feature>
<feature type="strand" evidence="34">
    <location>
        <begin position="77"/>
        <end position="83"/>
    </location>
</feature>
<feature type="helix" evidence="33">
    <location>
        <begin position="84"/>
        <end position="86"/>
    </location>
</feature>
<feature type="strand" evidence="35">
    <location>
        <begin position="87"/>
        <end position="90"/>
    </location>
</feature>
<feature type="strand" evidence="34">
    <location>
        <begin position="94"/>
        <end position="99"/>
    </location>
</feature>
<feature type="strand" evidence="34">
    <location>
        <begin position="103"/>
        <end position="112"/>
    </location>
</feature>
<feature type="helix" evidence="34">
    <location>
        <begin position="115"/>
        <end position="117"/>
    </location>
</feature>
<feature type="strand" evidence="34">
    <location>
        <begin position="119"/>
        <end position="127"/>
    </location>
</feature>
<feature type="strand" evidence="34">
    <location>
        <begin position="129"/>
        <end position="131"/>
    </location>
</feature>
<feature type="strand" evidence="34">
    <location>
        <begin position="133"/>
        <end position="136"/>
    </location>
</feature>
<feature type="strand" evidence="34">
    <location>
        <begin position="140"/>
        <end position="145"/>
    </location>
</feature>
<comment type="function">
    <text evidence="1 5 16">Inhibitory receptor on antigen activated T-cells that plays a critical role in induction and maintenance of immune tolerance to self (PubMed:21276005, PubMed:37208329). Delivers inhibitory signals upon binding to ligands CD274/PDCD1L1 and CD273/PDCD1LG2 (PubMed:21276005). Following T-cell receptor (TCR) engagement, PDCD1 associates with CD3-TCR in the immunological synapse and directly inhibits T-cell activation (By similarity). Suppresses T-cell activation through the recruitment of PTPN11/SHP-2: following ligand-binding, PDCD1 is phosphorylated within the ITSM motif, leading to the recruitment of the protein tyrosine phosphatase PTPN11/SHP-2 that mediates dephosphorylation of key TCR proximal signaling molecules, such as ZAP70, PRKCQ/PKCtheta and CD247/CD3zeta (By similarity).</text>
</comment>
<comment type="function">
    <text evidence="6 8 9 19">The PDCD1-mediated inhibitory pathway is exploited by tumors to attenuate anti-tumor immunity and escape destruction by the immune system, thereby facilitating tumor survival (PubMed:28951311). The interaction with CD274/PDCD1L1 inhibits cytotoxic T lymphocytes (CTLs) effector function (PubMed:28951311). The blockage of the PDCD1-mediated pathway results in the reversal of the exhausted T-cell phenotype and the normalization of the anti-tumor response, providing a rationale for cancer immunotherapy (PubMed:22658127, PubMed:25034862, PubMed:25399552).</text>
</comment>
<comment type="activity regulation">
    <text evidence="6 8 9 11 12 13">Inhibited by pembrolizumab (also named MK-3475 or lambrolizumab), a monoclonal antibody that prevents the interaction with CD274/PDCD1L1 (PubMed:27325296, PubMed:27734966). Inhibited by nivolumab (also named ONO-4538, BMS-936558 or Opdivo), a monoclonal antibody that prevents the interaction with CD274/PDCD1L1 (PubMed:28165004). The interaction with nivolumab is not dependent on glycosylation and depends on a loop at the N-terminus (N-terminal loop, corresponding to residues 25-34) (PubMed:28165004). Targeting the interaction between PDCD1 and CD274/PDCD1L1 with pembrolizumab and nivolumab antibodies has demonstrated great promise as a strategy for controlling and eradicating cancer (PubMed:22658127, PubMed:25034862, PubMed:25399552). Pembrolizumab and nivolumab are used for treatment of patients with advanced melanoma (PubMed:25034862, PubMed:25399552). These antibodies are also effective against other cancers, such as non-small cell lung cancer, renal cell carcinoma, bladder cancer and Hodgkin's lymphoma (PubMed:25034862).</text>
</comment>
<comment type="subunit">
    <text evidence="1 10 14">Monomer (PubMed:26602187). Interacts with CD274/PDCD1L1 (PubMed:26602187). Interacts with CD273/PDCD1LG2 (By similarity). Interacts with FBXO38; leading to ubiquitination and degradation of PDCD1 by the proteasome (PubMed:30487606).</text>
</comment>
<comment type="interaction">
    <interactant intactId="EBI-4314328">
        <id>Q15116</id>
    </interactant>
    <interactant intactId="EBI-4314282">
        <id>Q9NZQ7</id>
        <label>CD274</label>
    </interactant>
    <organismsDiffer>false</organismsDiffer>
    <experiments>17</experiments>
</comment>
<comment type="interaction">
    <interactant intactId="EBI-4314328">
        <id>Q15116</id>
    </interactant>
    <interactant intactId="EBI-15686469">
        <id>Q9NZQ7-1</id>
        <label>CD274</label>
    </interactant>
    <organismsDiffer>false</organismsDiffer>
    <experiments>2</experiments>
</comment>
<comment type="interaction">
    <interactant intactId="EBI-4314328">
        <id>Q15116</id>
    </interactant>
    <interactant intactId="EBI-16427978">
        <id>Q9BQ51</id>
        <label>PDCD1LG2</label>
    </interactant>
    <organismsDiffer>false</organismsDiffer>
    <experiments>14</experiments>
</comment>
<comment type="interaction">
    <interactant intactId="EBI-4314328">
        <id>Q15116</id>
    </interactant>
    <interactant intactId="EBI-297779">
        <id>Q06124</id>
        <label>PTPN11</label>
    </interactant>
    <organismsDiffer>false</organismsDiffer>
    <experiments>3</experiments>
</comment>
<comment type="subcellular location">
    <subcellularLocation>
        <location evidence="14">Cell membrane</location>
        <topology>Single-pass type I membrane protein</topology>
    </subcellularLocation>
</comment>
<comment type="developmental stage">
    <text evidence="17">Induced at programmed cell death.</text>
</comment>
<comment type="PTM">
    <text evidence="14 16">Ubiquitinated at Lys-233 by the SCF(FBXO38) complex, leading to its proteasomal degradation (PubMed:30487606). Ubiquitinated via 'Lys-48'-linked polyubiquitin chains (PubMed:30487606). Deubiquitinated and thus stabilized by USP5 (PubMed:37208329).</text>
</comment>
<comment type="PTM">
    <text evidence="1 16">Tyrosine phosphorylated at Tyr-223 (within ITIM motif) and Tyr-248 (ITSM motif) upon ligand binding. Phosphorylation at Tyr-248 promotes the recruitment of the protein tyrosine phosphatase PTPN11/SHP-2 that mediates dephosphorylation of key TCR proximal signaling molecules, such as ZAP70, PRKCQ/PKCtheta and CD247/CD3zeta. Phosphorylation at Thr-234 promotes the recruitment of the deubiquitinase USP5 (PubMed:37208329).</text>
</comment>
<comment type="PTM">
    <text evidence="13">N-glycosylation at Asn-58 contains at least two N-acetylglucosamine units and one fucose (PubMed:28165004). N-glycosylation does not affect binding to nivolumab drug (PubMed:28165004).</text>
</comment>
<comment type="disease" evidence="15">
    <disease id="DI-06972">
        <name>Autoimmune disease with susceptibility to Mycobacterium tuberculosis</name>
        <acronym>AIMTBS</acronym>
        <description>An autosomal recessive immunologic disorder characterized by lymphoproliferative autoimmunity and onset of various autoimmune diseases in early childhood. Death from autoimmune pneumonitis may occur.</description>
        <dbReference type="MIM" id="621004"/>
    </disease>
    <text evidence="15">The disease may be caused by variants affecting the gene represented in this entry. PDCD1 deficiency due to a homozygous frameshift mutation has been detected in a patient with severe tuberculosis and autoimmunity. The patient had depletion and dysfunction of multiple T and NK lymphocyte subsets and impaired gamma-IFN production.</text>
</comment>
<sequence>MQIPQAPWPVVWAVLQLGWRPGWFLDSPDRPWNPPTFSPALLVVTEGDNATFTCSFSNTSESFVLNWYRMSPSNQTDKLAAFPEDRSQPGQDCRFRVTQLPNGRDFHMSVVRARRNDSGTYLCGAISLAPKAQIKESLRAELRVTERRAEVPTAHPSPSPRPAGQFQTLVVGVVGGLLGSLVLLVWVLAVICSRAARGTIGARRTGQPLKEDPSAVPVFSVDYGELDFQWREKTPEPPVPCVPEQTEYATIVFPSGMGTSSPARRGSADGPRSAQPLRPEDGHCSWPL</sequence>
<dbReference type="EMBL" id="L27440">
    <property type="protein sequence ID" value="AAC41700.1"/>
    <property type="molecule type" value="Genomic_DNA"/>
</dbReference>
<dbReference type="EMBL" id="U64863">
    <property type="protein sequence ID" value="AAC51773.1"/>
    <property type="molecule type" value="mRNA"/>
</dbReference>
<dbReference type="EMBL" id="AF363458">
    <property type="protein sequence ID" value="AAN64003.1"/>
    <property type="molecule type" value="Genomic_DNA"/>
</dbReference>
<dbReference type="EMBL" id="AY238517">
    <property type="protein sequence ID" value="AAO63583.1"/>
    <property type="molecule type" value="mRNA"/>
</dbReference>
<dbReference type="EMBL" id="EF064716">
    <property type="protein sequence ID" value="ABK41899.1"/>
    <property type="molecule type" value="Genomic_DNA"/>
</dbReference>
<dbReference type="EMBL" id="AK313848">
    <property type="protein sequence ID" value="BAG36577.1"/>
    <property type="molecule type" value="mRNA"/>
</dbReference>
<dbReference type="EMBL" id="CH471063">
    <property type="protein sequence ID" value="EAW71298.1"/>
    <property type="molecule type" value="Genomic_DNA"/>
</dbReference>
<dbReference type="EMBL" id="BC074740">
    <property type="protein sequence ID" value="AAH74740.1"/>
    <property type="molecule type" value="mRNA"/>
</dbReference>
<dbReference type="CCDS" id="CCDS33428.1"/>
<dbReference type="PIR" id="A55737">
    <property type="entry name" value="A55737"/>
</dbReference>
<dbReference type="RefSeq" id="NP_005009.2">
    <property type="nucleotide sequence ID" value="NM_005018.3"/>
</dbReference>
<dbReference type="PDB" id="2M2D">
    <property type="method" value="NMR"/>
    <property type="chains" value="A=34-150"/>
</dbReference>
<dbReference type="PDB" id="3RRQ">
    <property type="method" value="X-ray"/>
    <property type="resolution" value="2.10 A"/>
    <property type="chains" value="A=32-160"/>
</dbReference>
<dbReference type="PDB" id="4ZQK">
    <property type="method" value="X-ray"/>
    <property type="resolution" value="2.45 A"/>
    <property type="chains" value="B=33-150"/>
</dbReference>
<dbReference type="PDB" id="5B8C">
    <property type="method" value="X-ray"/>
    <property type="resolution" value="2.15 A"/>
    <property type="chains" value="C/F/I/L=32-160"/>
</dbReference>
<dbReference type="PDB" id="5GGR">
    <property type="method" value="X-ray"/>
    <property type="resolution" value="3.30 A"/>
    <property type="chains" value="Y/Z=26-150"/>
</dbReference>
<dbReference type="PDB" id="5GGS">
    <property type="method" value="X-ray"/>
    <property type="resolution" value="2.00 A"/>
    <property type="chains" value="Y/Z=26-148"/>
</dbReference>
<dbReference type="PDB" id="5IUS">
    <property type="method" value="X-ray"/>
    <property type="resolution" value="2.89 A"/>
    <property type="chains" value="A/B=26-146"/>
</dbReference>
<dbReference type="PDB" id="5JXE">
    <property type="method" value="X-ray"/>
    <property type="resolution" value="2.90 A"/>
    <property type="chains" value="A/B=33-146"/>
</dbReference>
<dbReference type="PDB" id="5WT9">
    <property type="method" value="X-ray"/>
    <property type="resolution" value="2.40 A"/>
    <property type="chains" value="G=1-167"/>
</dbReference>
<dbReference type="PDB" id="6HIG">
    <property type="method" value="X-ray"/>
    <property type="resolution" value="2.20 A"/>
    <property type="chains" value="B=33-150"/>
</dbReference>
<dbReference type="PDB" id="6J14">
    <property type="method" value="X-ray"/>
    <property type="resolution" value="1.40 A"/>
    <property type="chains" value="G=33-147"/>
</dbReference>
<dbReference type="PDB" id="6J15">
    <property type="method" value="X-ray"/>
    <property type="resolution" value="2.60 A"/>
    <property type="chains" value="C/D=32-147"/>
</dbReference>
<dbReference type="PDB" id="6JBT">
    <property type="method" value="X-ray"/>
    <property type="resolution" value="2.47 A"/>
    <property type="chains" value="F=21-170"/>
</dbReference>
<dbReference type="PDB" id="6JJP">
    <property type="method" value="X-ray"/>
    <property type="resolution" value="2.90 A"/>
    <property type="chains" value="C/F=21-167"/>
</dbReference>
<dbReference type="PDB" id="6K0Y">
    <property type="method" value="X-ray"/>
    <property type="resolution" value="1.70 A"/>
    <property type="chains" value="C=25-167"/>
</dbReference>
<dbReference type="PDB" id="6R5G">
    <property type="method" value="NMR"/>
    <property type="chains" value="B=244-254"/>
</dbReference>
<dbReference type="PDB" id="6ROY">
    <property type="method" value="X-ray"/>
    <property type="resolution" value="2.10 A"/>
    <property type="chains" value="C/D=219-229"/>
</dbReference>
<dbReference type="PDB" id="6ROZ">
    <property type="method" value="X-ray"/>
    <property type="resolution" value="2.89 A"/>
    <property type="chains" value="B/D=244-254"/>
</dbReference>
<dbReference type="PDB" id="6UMT">
    <property type="method" value="X-ray"/>
    <property type="resolution" value="1.99 A"/>
    <property type="chains" value="A=33-150"/>
</dbReference>
<dbReference type="PDB" id="6UMU">
    <property type="method" value="X-ray"/>
    <property type="resolution" value="1.18 A"/>
    <property type="chains" value="A=33-150"/>
</dbReference>
<dbReference type="PDB" id="6UMV">
    <property type="method" value="X-ray"/>
    <property type="resolution" value="1.42 A"/>
    <property type="chains" value="A=33-150"/>
</dbReference>
<dbReference type="PDB" id="6XKR">
    <property type="method" value="X-ray"/>
    <property type="resolution" value="2.59 A"/>
    <property type="chains" value="P=32-160"/>
</dbReference>
<dbReference type="PDB" id="7BXA">
    <property type="method" value="X-ray"/>
    <property type="resolution" value="3.32 A"/>
    <property type="chains" value="A/P=29-150"/>
</dbReference>
<dbReference type="PDB" id="7CGW">
    <property type="method" value="X-ray"/>
    <property type="resolution" value="3.20 A"/>
    <property type="chains" value="C/P=25-169"/>
</dbReference>
<dbReference type="PDB" id="7CU5">
    <property type="method" value="X-ray"/>
    <property type="resolution" value="2.81 A"/>
    <property type="chains" value="E/Q=30-147"/>
</dbReference>
<dbReference type="PDB" id="7E9B">
    <property type="method" value="X-ray"/>
    <property type="resolution" value="1.78 A"/>
    <property type="chains" value="C=32-146"/>
</dbReference>
<dbReference type="PDB" id="7VUX">
    <property type="method" value="X-ray"/>
    <property type="resolution" value="1.64 A"/>
    <property type="chains" value="A=32-160"/>
</dbReference>
<dbReference type="PDB" id="7WSL">
    <property type="method" value="X-ray"/>
    <property type="resolution" value="1.53 A"/>
    <property type="chains" value="D=29-150"/>
</dbReference>
<dbReference type="PDB" id="7WVM">
    <property type="method" value="X-ray"/>
    <property type="resolution" value="3.40 A"/>
    <property type="chains" value="E/F=31-147"/>
</dbReference>
<dbReference type="PDB" id="8AS0">
    <property type="method" value="X-ray"/>
    <property type="resolution" value="3.50 A"/>
    <property type="chains" value="A/F/I/L/O/R/X/Y=24-170"/>
</dbReference>
<dbReference type="PDB" id="8EQ6">
    <property type="method" value="X-ray"/>
    <property type="resolution" value="1.65 A"/>
    <property type="chains" value="A=25-148"/>
</dbReference>
<dbReference type="PDB" id="8GY5">
    <property type="method" value="X-ray"/>
    <property type="resolution" value="1.98 A"/>
    <property type="chains" value="P/Q=26-150"/>
</dbReference>
<dbReference type="PDB" id="8U31">
    <property type="method" value="X-ray"/>
    <property type="resolution" value="2.73 A"/>
    <property type="chains" value="A=25-146"/>
</dbReference>
<dbReference type="PDB" id="8U32">
    <property type="method" value="X-ray"/>
    <property type="resolution" value="2.51 A"/>
    <property type="chains" value="A/D=25-146"/>
</dbReference>
<dbReference type="PDB" id="9HK1">
    <property type="method" value="X-ray"/>
    <property type="resolution" value="2.03 A"/>
    <property type="chains" value="A/B=25-148"/>
</dbReference>
<dbReference type="PDBsum" id="2M2D"/>
<dbReference type="PDBsum" id="3RRQ"/>
<dbReference type="PDBsum" id="4ZQK"/>
<dbReference type="PDBsum" id="5B8C"/>
<dbReference type="PDBsum" id="5GGR"/>
<dbReference type="PDBsum" id="5GGS"/>
<dbReference type="PDBsum" id="5IUS"/>
<dbReference type="PDBsum" id="5JXE"/>
<dbReference type="PDBsum" id="5WT9"/>
<dbReference type="PDBsum" id="6HIG"/>
<dbReference type="PDBsum" id="6J14"/>
<dbReference type="PDBsum" id="6J15"/>
<dbReference type="PDBsum" id="6JBT"/>
<dbReference type="PDBsum" id="6JJP"/>
<dbReference type="PDBsum" id="6K0Y"/>
<dbReference type="PDBsum" id="6R5G"/>
<dbReference type="PDBsum" id="6ROY"/>
<dbReference type="PDBsum" id="6ROZ"/>
<dbReference type="PDBsum" id="6UMT"/>
<dbReference type="PDBsum" id="6UMU"/>
<dbReference type="PDBsum" id="6UMV"/>
<dbReference type="PDBsum" id="6XKR"/>
<dbReference type="PDBsum" id="7BXA"/>
<dbReference type="PDBsum" id="7CGW"/>
<dbReference type="PDBsum" id="7CU5"/>
<dbReference type="PDBsum" id="7E9B"/>
<dbReference type="PDBsum" id="7VUX"/>
<dbReference type="PDBsum" id="7WSL"/>
<dbReference type="PDBsum" id="7WVM"/>
<dbReference type="PDBsum" id="8AS0"/>
<dbReference type="PDBsum" id="8EQ6"/>
<dbReference type="PDBsum" id="8GY5"/>
<dbReference type="PDBsum" id="8U31"/>
<dbReference type="PDBsum" id="8U32"/>
<dbReference type="PDBsum" id="9HK1"/>
<dbReference type="BMRB" id="Q15116"/>
<dbReference type="SMR" id="Q15116"/>
<dbReference type="BioGRID" id="111160">
    <property type="interactions" value="133"/>
</dbReference>
<dbReference type="CORUM" id="Q15116"/>
<dbReference type="DIP" id="DIP-44126N"/>
<dbReference type="FunCoup" id="Q15116">
    <property type="interactions" value="872"/>
</dbReference>
<dbReference type="IntAct" id="Q15116">
    <property type="interactions" value="67"/>
</dbReference>
<dbReference type="MINT" id="Q15116"/>
<dbReference type="STRING" id="9606.ENSP00000335062"/>
<dbReference type="BindingDB" id="Q15116"/>
<dbReference type="ChEMBL" id="CHEMBL3307223"/>
<dbReference type="DrugBank" id="DB15767">
    <property type="generic name" value="AMP-224"/>
</dbReference>
<dbReference type="DrugBank" id="DB11595">
    <property type="generic name" value="Atezolizumab"/>
</dbReference>
<dbReference type="DrugBank" id="DB16668">
    <property type="generic name" value="Budigalimab"/>
</dbReference>
<dbReference type="DrugBank" id="DB14776">
    <property type="generic name" value="Camrelizumab"/>
</dbReference>
<dbReference type="DrugBank" id="DB14707">
    <property type="generic name" value="Cemiplimab"/>
</dbReference>
<dbReference type="DrugBank" id="DB05916">
    <property type="generic name" value="CT-011"/>
</dbReference>
<dbReference type="DrugBank" id="DB15627">
    <property type="generic name" value="Dostarlimab"/>
</dbReference>
<dbReference type="DrugBank" id="DB11714">
    <property type="generic name" value="Durvalumab"/>
</dbReference>
<dbReference type="DrugBank" id="DB16417">
    <property type="generic name" value="Geptanolimab"/>
</dbReference>
<dbReference type="DrugBank" id="DB15768">
    <property type="generic name" value="MEDI0680"/>
</dbReference>
<dbReference type="DrugBank" id="DB09035">
    <property type="generic name" value="Nivolumab"/>
</dbReference>
<dbReference type="DrugBank" id="DB09037">
    <property type="generic name" value="Pembrolizumab"/>
</dbReference>
<dbReference type="DrugBank" id="DB16740">
    <property type="generic name" value="Prolgolimab"/>
</dbReference>
<dbReference type="DrugBank" id="DB15766">
    <property type="generic name" value="Retifanlimab"/>
</dbReference>
<dbReference type="DrugBank" id="DB15765">
    <property type="generic name" value="Sintilimab"/>
</dbReference>
<dbReference type="DrugBank" id="DB14892">
    <property type="generic name" value="Spartalizumab"/>
</dbReference>
<dbReference type="DrugBank" id="DB14922">
    <property type="generic name" value="Tislelizumab"/>
</dbReference>
<dbReference type="DrugBank" id="DB15043">
    <property type="generic name" value="Toripalimab"/>
</dbReference>
<dbReference type="DrugCentral" id="Q15116"/>
<dbReference type="GuidetoPHARMACOLOGY" id="2760"/>
<dbReference type="TCDB" id="8.A.17.4.1">
    <property type="family name" value="the na(+) channel auxiliary subunit Beta1-Beta4 (sca-Beta) family"/>
</dbReference>
<dbReference type="GlyCosmos" id="Q15116">
    <property type="glycosylation" value="4 sites, No reported glycans"/>
</dbReference>
<dbReference type="GlyGen" id="Q15116">
    <property type="glycosylation" value="5 sites"/>
</dbReference>
<dbReference type="iPTMnet" id="Q15116"/>
<dbReference type="PhosphoSitePlus" id="Q15116"/>
<dbReference type="BioMuta" id="PDCD1"/>
<dbReference type="DMDM" id="145559515"/>
<dbReference type="MassIVE" id="Q15116"/>
<dbReference type="PaxDb" id="9606-ENSP00000335062"/>
<dbReference type="PeptideAtlas" id="Q15116"/>
<dbReference type="ProteomicsDB" id="60443"/>
<dbReference type="ABCD" id="Q15116">
    <property type="antibodies" value="130 sequenced antibodies"/>
</dbReference>
<dbReference type="Antibodypedia" id="20331">
    <property type="antibodies" value="3382 antibodies from 54 providers"/>
</dbReference>
<dbReference type="CPTC" id="Q15116">
    <property type="antibodies" value="1 antibody"/>
</dbReference>
<dbReference type="DNASU" id="5133"/>
<dbReference type="Ensembl" id="ENST00000334409.10">
    <property type="protein sequence ID" value="ENSP00000335062.5"/>
    <property type="gene ID" value="ENSG00000188389.12"/>
</dbReference>
<dbReference type="Ensembl" id="ENST00000618185.3">
    <property type="protein sequence ID" value="ENSP00000480684.1"/>
    <property type="gene ID" value="ENSG00000276977.3"/>
</dbReference>
<dbReference type="GeneID" id="5133"/>
<dbReference type="KEGG" id="hsa:5133"/>
<dbReference type="MANE-Select" id="ENST00000334409.10">
    <property type="protein sequence ID" value="ENSP00000335062.5"/>
    <property type="RefSeq nucleotide sequence ID" value="NM_005018.3"/>
    <property type="RefSeq protein sequence ID" value="NP_005009.2"/>
</dbReference>
<dbReference type="UCSC" id="uc002wcq.5">
    <property type="organism name" value="human"/>
</dbReference>
<dbReference type="AGR" id="HGNC:8760"/>
<dbReference type="CTD" id="5133"/>
<dbReference type="DisGeNET" id="5133"/>
<dbReference type="GeneCards" id="PDCD1"/>
<dbReference type="HGNC" id="HGNC:8760">
    <property type="gene designation" value="PDCD1"/>
</dbReference>
<dbReference type="HPA" id="ENSG00000188389">
    <property type="expression patterns" value="Tissue enhanced (heart muscle, lymphoid tissue)"/>
</dbReference>
<dbReference type="MalaCards" id="PDCD1"/>
<dbReference type="MIM" id="600244">
    <property type="type" value="gene"/>
</dbReference>
<dbReference type="MIM" id="621004">
    <property type="type" value="phenotype"/>
</dbReference>
<dbReference type="neXtProt" id="NX_Q15116"/>
<dbReference type="OpenTargets" id="ENSG00000188389"/>
<dbReference type="Orphanet" id="536">
    <property type="disease" value="Systemic lupus erythematosus"/>
</dbReference>
<dbReference type="PharmGKB" id="PA33110"/>
<dbReference type="VEuPathDB" id="HostDB:ENSG00000188389"/>
<dbReference type="eggNOG" id="ENOG502SUIW">
    <property type="taxonomic scope" value="Eukaryota"/>
</dbReference>
<dbReference type="GeneTree" id="ENSGT00390000013662"/>
<dbReference type="HOGENOM" id="CLU_1075828_0_0_1"/>
<dbReference type="InParanoid" id="Q15116"/>
<dbReference type="OMA" id="CVHTEYA"/>
<dbReference type="OrthoDB" id="9940233at2759"/>
<dbReference type="PAN-GO" id="Q15116">
    <property type="GO annotations" value="3 GO annotations based on evolutionary models"/>
</dbReference>
<dbReference type="PhylomeDB" id="Q15116"/>
<dbReference type="TreeFam" id="TF336181"/>
<dbReference type="PathwayCommons" id="Q15116"/>
<dbReference type="Reactome" id="R-HSA-389948">
    <property type="pathway name" value="Co-inhibition by PD-1"/>
</dbReference>
<dbReference type="Reactome" id="R-HSA-9679191">
    <property type="pathway name" value="Potential therapeutics for SARS"/>
</dbReference>
<dbReference type="SignaLink" id="Q15116"/>
<dbReference type="SIGNOR" id="Q15116"/>
<dbReference type="BioGRID-ORCS" id="5133">
    <property type="hits" value="11 hits in 1153 CRISPR screens"/>
</dbReference>
<dbReference type="ChiTaRS" id="PDCD1">
    <property type="organism name" value="human"/>
</dbReference>
<dbReference type="EvolutionaryTrace" id="Q15116"/>
<dbReference type="GeneWiki" id="Programmed_cell_death_1"/>
<dbReference type="GenomeRNAi" id="5133"/>
<dbReference type="Pharos" id="Q15116">
    <property type="development level" value="Tclin"/>
</dbReference>
<dbReference type="PRO" id="PR:Q15116"/>
<dbReference type="Proteomes" id="UP000005640">
    <property type="component" value="Chromosome 2"/>
</dbReference>
<dbReference type="RNAct" id="Q15116">
    <property type="molecule type" value="protein"/>
</dbReference>
<dbReference type="Bgee" id="ENSG00000188389">
    <property type="expression patterns" value="Expressed in lymph node and 85 other cell types or tissues"/>
</dbReference>
<dbReference type="ExpressionAtlas" id="Q15116">
    <property type="expression patterns" value="baseline and differential"/>
</dbReference>
<dbReference type="GO" id="GO:0009897">
    <property type="term" value="C:external side of plasma membrane"/>
    <property type="evidence" value="ECO:0000318"/>
    <property type="project" value="GO_Central"/>
</dbReference>
<dbReference type="GO" id="GO:0005886">
    <property type="term" value="C:plasma membrane"/>
    <property type="evidence" value="ECO:0000314"/>
    <property type="project" value="UniProt"/>
</dbReference>
<dbReference type="GO" id="GO:0038023">
    <property type="term" value="F:signaling receptor activity"/>
    <property type="evidence" value="ECO:0000314"/>
    <property type="project" value="UniProtKB"/>
</dbReference>
<dbReference type="GO" id="GO:0002250">
    <property type="term" value="P:adaptive immune response"/>
    <property type="evidence" value="ECO:0007669"/>
    <property type="project" value="UniProtKB-KW"/>
</dbReference>
<dbReference type="GO" id="GO:0006915">
    <property type="term" value="P:apoptotic process"/>
    <property type="evidence" value="ECO:0000304"/>
    <property type="project" value="ProtInc"/>
</dbReference>
<dbReference type="GO" id="GO:0001783">
    <property type="term" value="P:B cell apoptotic process"/>
    <property type="evidence" value="ECO:0007669"/>
    <property type="project" value="Ensembl"/>
</dbReference>
<dbReference type="GO" id="GO:0006959">
    <property type="term" value="P:humoral immune response"/>
    <property type="evidence" value="ECO:0000304"/>
    <property type="project" value="ProtInc"/>
</dbReference>
<dbReference type="GO" id="GO:0002903">
    <property type="term" value="P:negative regulation of B cell apoptotic process"/>
    <property type="evidence" value="ECO:0007669"/>
    <property type="project" value="Ensembl"/>
</dbReference>
<dbReference type="GO" id="GO:0050777">
    <property type="term" value="P:negative regulation of immune response"/>
    <property type="evidence" value="ECO:0000250"/>
    <property type="project" value="UniProtKB"/>
</dbReference>
<dbReference type="GO" id="GO:0050868">
    <property type="term" value="P:negative regulation of T cell activation"/>
    <property type="evidence" value="ECO:0000314"/>
    <property type="project" value="UniProtKB"/>
</dbReference>
<dbReference type="GO" id="GO:0002841">
    <property type="term" value="P:negative regulation of T cell mediated immune response to tumor cell"/>
    <property type="evidence" value="ECO:0000314"/>
    <property type="project" value="UniProtKB"/>
</dbReference>
<dbReference type="GO" id="GO:0002644">
    <property type="term" value="P:negative regulation of tolerance induction"/>
    <property type="evidence" value="ECO:0007669"/>
    <property type="project" value="Ensembl"/>
</dbReference>
<dbReference type="GO" id="GO:0070234">
    <property type="term" value="P:positive regulation of T cell apoptotic process"/>
    <property type="evidence" value="ECO:0000318"/>
    <property type="project" value="GO_Central"/>
</dbReference>
<dbReference type="GO" id="GO:0050776">
    <property type="term" value="P:regulation of immune response"/>
    <property type="evidence" value="ECO:0000318"/>
    <property type="project" value="GO_Central"/>
</dbReference>
<dbReference type="GO" id="GO:1902482">
    <property type="term" value="P:regulatory T cell apoptotic process"/>
    <property type="evidence" value="ECO:0007669"/>
    <property type="project" value="Ensembl"/>
</dbReference>
<dbReference type="CDD" id="cd16088">
    <property type="entry name" value="IgV_PD1"/>
    <property type="match status" value="1"/>
</dbReference>
<dbReference type="FunFam" id="2.60.40.10:FF:001952">
    <property type="entry name" value="Programmed cell death protein 1"/>
    <property type="match status" value="1"/>
</dbReference>
<dbReference type="Gene3D" id="2.60.40.10">
    <property type="entry name" value="Immunoglobulins"/>
    <property type="match status" value="1"/>
</dbReference>
<dbReference type="InterPro" id="IPR007110">
    <property type="entry name" value="Ig-like_dom"/>
</dbReference>
<dbReference type="InterPro" id="IPR036179">
    <property type="entry name" value="Ig-like_dom_sf"/>
</dbReference>
<dbReference type="InterPro" id="IPR013783">
    <property type="entry name" value="Ig-like_fold"/>
</dbReference>
<dbReference type="InterPro" id="IPR003599">
    <property type="entry name" value="Ig_sub"/>
</dbReference>
<dbReference type="InterPro" id="IPR013106">
    <property type="entry name" value="Ig_V-set"/>
</dbReference>
<dbReference type="InterPro" id="IPR042379">
    <property type="entry name" value="PDCD1"/>
</dbReference>
<dbReference type="PANTHER" id="PTHR15264">
    <property type="entry name" value="PROGRAMMED CELL DEATH PROTEIN 1"/>
    <property type="match status" value="1"/>
</dbReference>
<dbReference type="PANTHER" id="PTHR15264:SF2">
    <property type="entry name" value="PROGRAMMED CELL DEATH PROTEIN 1"/>
    <property type="match status" value="1"/>
</dbReference>
<dbReference type="Pfam" id="PF07686">
    <property type="entry name" value="V-set"/>
    <property type="match status" value="1"/>
</dbReference>
<dbReference type="SMART" id="SM00409">
    <property type="entry name" value="IG"/>
    <property type="match status" value="1"/>
</dbReference>
<dbReference type="SMART" id="SM00406">
    <property type="entry name" value="IGv"/>
    <property type="match status" value="1"/>
</dbReference>
<dbReference type="SUPFAM" id="SSF48726">
    <property type="entry name" value="Immunoglobulin"/>
    <property type="match status" value="1"/>
</dbReference>
<dbReference type="PROSITE" id="PS50835">
    <property type="entry name" value="IG_LIKE"/>
    <property type="match status" value="1"/>
</dbReference>
<accession>Q15116</accession>
<accession>O00517</accession>
<accession>Q8IX89</accession>